<keyword id="KW-0067">ATP-binding</keyword>
<keyword id="KW-0131">Cell cycle</keyword>
<keyword id="KW-0132">Cell division</keyword>
<keyword id="KW-0133">Cell shape</keyword>
<keyword id="KW-0961">Cell wall biogenesis/degradation</keyword>
<keyword id="KW-0963">Cytoplasm</keyword>
<keyword id="KW-0436">Ligase</keyword>
<keyword id="KW-0547">Nucleotide-binding</keyword>
<keyword id="KW-0573">Peptidoglycan synthesis</keyword>
<accession>B3QLW3</accession>
<organism>
    <name type="scientific">Chlorobaculum parvum (strain DSM 263 / NCIMB 8327)</name>
    <name type="common">Chlorobium vibrioforme subsp. thiosulfatophilum</name>
    <dbReference type="NCBI Taxonomy" id="517417"/>
    <lineage>
        <taxon>Bacteria</taxon>
        <taxon>Pseudomonadati</taxon>
        <taxon>Chlorobiota</taxon>
        <taxon>Chlorobiia</taxon>
        <taxon>Chlorobiales</taxon>
        <taxon>Chlorobiaceae</taxon>
        <taxon>Chlorobaculum</taxon>
    </lineage>
</organism>
<gene>
    <name evidence="1" type="primary">murC</name>
    <name type="ordered locus">Cpar_2063</name>
</gene>
<sequence length="471" mass="50715">MELGRTRNVHIVGIGGAGMSAIAELLLKSGFSVSGSDLASGEVIDKLRELGAVVWQGHEAEHVGMSDVVVYSSAVRPESNVEIQAAEKQGIPVIKRDEMLGELMRYKVGICVSGTHGKTTTTAMIATMLLESGQSPTVMIGGVSDYLKGSTVVGEGRHMVIEADEYDRAFLKLTPTIAVVNSLESEHMDTYGTMDNLRDSFAAFANKVPFYGRVICCVDWPEIRSLISRLNRRYTTFGIEEPADVMASDLEACEGGSVFTVEAFGESYPGVRLGVPGRHNVLNALAAFSVGLEIGLPPEKIIAGLGAYTGMRRRFQMKFKGGNGLLVVDDYAHHPSEVKATVKAARHGWKEHRIVAVFQPHLYSRTSEFAVEFGWALSRADAIYVAGIYPSRERTEDFPGVTGELVAEAARKAGAKEVTFEPDSEQLLDSLRQEAGPDTLILFMGAGDITHLATRFASMCADEGTATGAAG</sequence>
<name>MURC_CHLP8</name>
<reference key="1">
    <citation type="submission" date="2008-06" db="EMBL/GenBank/DDBJ databases">
        <title>Complete sequence of Chlorobaculum parvum NCIB 8327.</title>
        <authorList>
            <consortium name="US DOE Joint Genome Institute"/>
            <person name="Lucas S."/>
            <person name="Copeland A."/>
            <person name="Lapidus A."/>
            <person name="Glavina del Rio T."/>
            <person name="Dalin E."/>
            <person name="Tice H."/>
            <person name="Bruce D."/>
            <person name="Goodwin L."/>
            <person name="Pitluck S."/>
            <person name="Schmutz J."/>
            <person name="Larimer F."/>
            <person name="Land M."/>
            <person name="Hauser L."/>
            <person name="Kyrpides N."/>
            <person name="Mikhailova N."/>
            <person name="Zhao F."/>
            <person name="Li T."/>
            <person name="Liu Z."/>
            <person name="Overmann J."/>
            <person name="Bryant D.A."/>
            <person name="Richardson P."/>
        </authorList>
    </citation>
    <scope>NUCLEOTIDE SEQUENCE [LARGE SCALE GENOMIC DNA]</scope>
    <source>
        <strain>DSM 263 / NCIMB 8327</strain>
    </source>
</reference>
<dbReference type="EC" id="6.3.2.8" evidence="1"/>
<dbReference type="EMBL" id="CP001099">
    <property type="protein sequence ID" value="ACF12449.1"/>
    <property type="molecule type" value="Genomic_DNA"/>
</dbReference>
<dbReference type="RefSeq" id="WP_012503282.1">
    <property type="nucleotide sequence ID" value="NC_011027.1"/>
</dbReference>
<dbReference type="SMR" id="B3QLW3"/>
<dbReference type="STRING" id="517417.Cpar_2063"/>
<dbReference type="KEGG" id="cpc:Cpar_2063"/>
<dbReference type="eggNOG" id="COG0773">
    <property type="taxonomic scope" value="Bacteria"/>
</dbReference>
<dbReference type="HOGENOM" id="CLU_028104_2_2_10"/>
<dbReference type="OrthoDB" id="9804126at2"/>
<dbReference type="UniPathway" id="UPA00219"/>
<dbReference type="Proteomes" id="UP000008811">
    <property type="component" value="Chromosome"/>
</dbReference>
<dbReference type="GO" id="GO:0005737">
    <property type="term" value="C:cytoplasm"/>
    <property type="evidence" value="ECO:0007669"/>
    <property type="project" value="UniProtKB-SubCell"/>
</dbReference>
<dbReference type="GO" id="GO:0005524">
    <property type="term" value="F:ATP binding"/>
    <property type="evidence" value="ECO:0007669"/>
    <property type="project" value="UniProtKB-UniRule"/>
</dbReference>
<dbReference type="GO" id="GO:0008763">
    <property type="term" value="F:UDP-N-acetylmuramate-L-alanine ligase activity"/>
    <property type="evidence" value="ECO:0007669"/>
    <property type="project" value="UniProtKB-UniRule"/>
</dbReference>
<dbReference type="GO" id="GO:0051301">
    <property type="term" value="P:cell division"/>
    <property type="evidence" value="ECO:0007669"/>
    <property type="project" value="UniProtKB-KW"/>
</dbReference>
<dbReference type="GO" id="GO:0071555">
    <property type="term" value="P:cell wall organization"/>
    <property type="evidence" value="ECO:0007669"/>
    <property type="project" value="UniProtKB-KW"/>
</dbReference>
<dbReference type="GO" id="GO:0009252">
    <property type="term" value="P:peptidoglycan biosynthetic process"/>
    <property type="evidence" value="ECO:0007669"/>
    <property type="project" value="UniProtKB-UniRule"/>
</dbReference>
<dbReference type="GO" id="GO:0008360">
    <property type="term" value="P:regulation of cell shape"/>
    <property type="evidence" value="ECO:0007669"/>
    <property type="project" value="UniProtKB-KW"/>
</dbReference>
<dbReference type="Gene3D" id="3.90.190.20">
    <property type="entry name" value="Mur ligase, C-terminal domain"/>
    <property type="match status" value="1"/>
</dbReference>
<dbReference type="Gene3D" id="3.40.1190.10">
    <property type="entry name" value="Mur-like, catalytic domain"/>
    <property type="match status" value="1"/>
</dbReference>
<dbReference type="Gene3D" id="3.40.50.720">
    <property type="entry name" value="NAD(P)-binding Rossmann-like Domain"/>
    <property type="match status" value="1"/>
</dbReference>
<dbReference type="HAMAP" id="MF_00046">
    <property type="entry name" value="MurC"/>
    <property type="match status" value="1"/>
</dbReference>
<dbReference type="InterPro" id="IPR036565">
    <property type="entry name" value="Mur-like_cat_sf"/>
</dbReference>
<dbReference type="InterPro" id="IPR004101">
    <property type="entry name" value="Mur_ligase_C"/>
</dbReference>
<dbReference type="InterPro" id="IPR036615">
    <property type="entry name" value="Mur_ligase_C_dom_sf"/>
</dbReference>
<dbReference type="InterPro" id="IPR013221">
    <property type="entry name" value="Mur_ligase_cen"/>
</dbReference>
<dbReference type="InterPro" id="IPR000713">
    <property type="entry name" value="Mur_ligase_N"/>
</dbReference>
<dbReference type="InterPro" id="IPR050061">
    <property type="entry name" value="MurCDEF_pg_biosynth"/>
</dbReference>
<dbReference type="InterPro" id="IPR005758">
    <property type="entry name" value="UDP-N-AcMur_Ala_ligase_MurC"/>
</dbReference>
<dbReference type="NCBIfam" id="TIGR01082">
    <property type="entry name" value="murC"/>
    <property type="match status" value="1"/>
</dbReference>
<dbReference type="PANTHER" id="PTHR43445:SF3">
    <property type="entry name" value="UDP-N-ACETYLMURAMATE--L-ALANINE LIGASE"/>
    <property type="match status" value="1"/>
</dbReference>
<dbReference type="PANTHER" id="PTHR43445">
    <property type="entry name" value="UDP-N-ACETYLMURAMATE--L-ALANINE LIGASE-RELATED"/>
    <property type="match status" value="1"/>
</dbReference>
<dbReference type="Pfam" id="PF01225">
    <property type="entry name" value="Mur_ligase"/>
    <property type="match status" value="1"/>
</dbReference>
<dbReference type="Pfam" id="PF02875">
    <property type="entry name" value="Mur_ligase_C"/>
    <property type="match status" value="1"/>
</dbReference>
<dbReference type="Pfam" id="PF08245">
    <property type="entry name" value="Mur_ligase_M"/>
    <property type="match status" value="1"/>
</dbReference>
<dbReference type="SUPFAM" id="SSF51984">
    <property type="entry name" value="MurCD N-terminal domain"/>
    <property type="match status" value="1"/>
</dbReference>
<dbReference type="SUPFAM" id="SSF53623">
    <property type="entry name" value="MurD-like peptide ligases, catalytic domain"/>
    <property type="match status" value="1"/>
</dbReference>
<dbReference type="SUPFAM" id="SSF53244">
    <property type="entry name" value="MurD-like peptide ligases, peptide-binding domain"/>
    <property type="match status" value="1"/>
</dbReference>
<comment type="function">
    <text evidence="1">Cell wall formation.</text>
</comment>
<comment type="catalytic activity">
    <reaction evidence="1">
        <text>UDP-N-acetyl-alpha-D-muramate + L-alanine + ATP = UDP-N-acetyl-alpha-D-muramoyl-L-alanine + ADP + phosphate + H(+)</text>
        <dbReference type="Rhea" id="RHEA:23372"/>
        <dbReference type="ChEBI" id="CHEBI:15378"/>
        <dbReference type="ChEBI" id="CHEBI:30616"/>
        <dbReference type="ChEBI" id="CHEBI:43474"/>
        <dbReference type="ChEBI" id="CHEBI:57972"/>
        <dbReference type="ChEBI" id="CHEBI:70757"/>
        <dbReference type="ChEBI" id="CHEBI:83898"/>
        <dbReference type="ChEBI" id="CHEBI:456216"/>
        <dbReference type="EC" id="6.3.2.8"/>
    </reaction>
</comment>
<comment type="pathway">
    <text evidence="1">Cell wall biogenesis; peptidoglycan biosynthesis.</text>
</comment>
<comment type="subcellular location">
    <subcellularLocation>
        <location evidence="1">Cytoplasm</location>
    </subcellularLocation>
</comment>
<comment type="similarity">
    <text evidence="1">Belongs to the MurCDEF family.</text>
</comment>
<proteinExistence type="inferred from homology"/>
<protein>
    <recommendedName>
        <fullName evidence="1">UDP-N-acetylmuramate--L-alanine ligase</fullName>
        <ecNumber evidence="1">6.3.2.8</ecNumber>
    </recommendedName>
    <alternativeName>
        <fullName evidence="1">UDP-N-acetylmuramoyl-L-alanine synthetase</fullName>
    </alternativeName>
</protein>
<feature type="chain" id="PRO_1000091088" description="UDP-N-acetylmuramate--L-alanine ligase">
    <location>
        <begin position="1"/>
        <end position="471"/>
    </location>
</feature>
<feature type="binding site" evidence="1">
    <location>
        <begin position="114"/>
        <end position="120"/>
    </location>
    <ligand>
        <name>ATP</name>
        <dbReference type="ChEBI" id="CHEBI:30616"/>
    </ligand>
</feature>
<evidence type="ECO:0000255" key="1">
    <source>
        <dbReference type="HAMAP-Rule" id="MF_00046"/>
    </source>
</evidence>